<comment type="catalytic activity">
    <reaction evidence="1">
        <text>tRNA(Leu) + L-leucine + ATP = L-leucyl-tRNA(Leu) + AMP + diphosphate</text>
        <dbReference type="Rhea" id="RHEA:11688"/>
        <dbReference type="Rhea" id="RHEA-COMP:9613"/>
        <dbReference type="Rhea" id="RHEA-COMP:9622"/>
        <dbReference type="ChEBI" id="CHEBI:30616"/>
        <dbReference type="ChEBI" id="CHEBI:33019"/>
        <dbReference type="ChEBI" id="CHEBI:57427"/>
        <dbReference type="ChEBI" id="CHEBI:78442"/>
        <dbReference type="ChEBI" id="CHEBI:78494"/>
        <dbReference type="ChEBI" id="CHEBI:456215"/>
        <dbReference type="EC" id="6.1.1.4"/>
    </reaction>
</comment>
<comment type="subcellular location">
    <subcellularLocation>
        <location evidence="1">Cytoplasm</location>
    </subcellularLocation>
</comment>
<comment type="similarity">
    <text evidence="1">Belongs to the class-I aminoacyl-tRNA synthetase family.</text>
</comment>
<name>SYL_HERAR</name>
<evidence type="ECO:0000255" key="1">
    <source>
        <dbReference type="HAMAP-Rule" id="MF_00049"/>
    </source>
</evidence>
<organism>
    <name type="scientific">Herminiimonas arsenicoxydans</name>
    <dbReference type="NCBI Taxonomy" id="204773"/>
    <lineage>
        <taxon>Bacteria</taxon>
        <taxon>Pseudomonadati</taxon>
        <taxon>Pseudomonadota</taxon>
        <taxon>Betaproteobacteria</taxon>
        <taxon>Burkholderiales</taxon>
        <taxon>Oxalobacteraceae</taxon>
        <taxon>Herminiimonas</taxon>
    </lineage>
</organism>
<feature type="chain" id="PRO_1000009353" description="Leucine--tRNA ligase">
    <location>
        <begin position="1"/>
        <end position="881"/>
    </location>
</feature>
<feature type="short sequence motif" description="'HIGH' region">
    <location>
        <begin position="48"/>
        <end position="58"/>
    </location>
</feature>
<feature type="short sequence motif" description="'KMSKS' region">
    <location>
        <begin position="638"/>
        <end position="642"/>
    </location>
</feature>
<feature type="binding site" evidence="1">
    <location>
        <position position="641"/>
    </location>
    <ligand>
        <name>ATP</name>
        <dbReference type="ChEBI" id="CHEBI:30616"/>
    </ligand>
</feature>
<dbReference type="EC" id="6.1.1.4" evidence="1"/>
<dbReference type="EMBL" id="CU207211">
    <property type="protein sequence ID" value="CAL62783.1"/>
    <property type="molecule type" value="Genomic_DNA"/>
</dbReference>
<dbReference type="SMR" id="A4G8E6"/>
<dbReference type="STRING" id="204773.HEAR2661"/>
<dbReference type="KEGG" id="har:HEAR2661"/>
<dbReference type="eggNOG" id="COG0495">
    <property type="taxonomic scope" value="Bacteria"/>
</dbReference>
<dbReference type="HOGENOM" id="CLU_004427_0_0_4"/>
<dbReference type="OrthoDB" id="9810365at2"/>
<dbReference type="Proteomes" id="UP000006697">
    <property type="component" value="Chromosome"/>
</dbReference>
<dbReference type="GO" id="GO:0005829">
    <property type="term" value="C:cytosol"/>
    <property type="evidence" value="ECO:0007669"/>
    <property type="project" value="TreeGrafter"/>
</dbReference>
<dbReference type="GO" id="GO:0002161">
    <property type="term" value="F:aminoacyl-tRNA deacylase activity"/>
    <property type="evidence" value="ECO:0007669"/>
    <property type="project" value="InterPro"/>
</dbReference>
<dbReference type="GO" id="GO:0005524">
    <property type="term" value="F:ATP binding"/>
    <property type="evidence" value="ECO:0007669"/>
    <property type="project" value="UniProtKB-UniRule"/>
</dbReference>
<dbReference type="GO" id="GO:0004823">
    <property type="term" value="F:leucine-tRNA ligase activity"/>
    <property type="evidence" value="ECO:0007669"/>
    <property type="project" value="UniProtKB-UniRule"/>
</dbReference>
<dbReference type="GO" id="GO:0006429">
    <property type="term" value="P:leucyl-tRNA aminoacylation"/>
    <property type="evidence" value="ECO:0007669"/>
    <property type="project" value="UniProtKB-UniRule"/>
</dbReference>
<dbReference type="CDD" id="cd07958">
    <property type="entry name" value="Anticodon_Ia_Leu_BEm"/>
    <property type="match status" value="1"/>
</dbReference>
<dbReference type="FunFam" id="1.10.730.10:FF:000003">
    <property type="entry name" value="Leucine--tRNA ligase"/>
    <property type="match status" value="1"/>
</dbReference>
<dbReference type="FunFam" id="2.20.28.290:FF:000001">
    <property type="entry name" value="Leucine--tRNA ligase"/>
    <property type="match status" value="1"/>
</dbReference>
<dbReference type="FunFam" id="3.10.20.590:FF:000001">
    <property type="entry name" value="Leucine--tRNA ligase"/>
    <property type="match status" value="1"/>
</dbReference>
<dbReference type="FunFam" id="3.40.50.620:FF:000003">
    <property type="entry name" value="Leucine--tRNA ligase"/>
    <property type="match status" value="1"/>
</dbReference>
<dbReference type="FunFam" id="3.40.50.620:FF:000056">
    <property type="entry name" value="Leucine--tRNA ligase"/>
    <property type="match status" value="1"/>
</dbReference>
<dbReference type="FunFam" id="3.90.740.10:FF:000012">
    <property type="entry name" value="Leucine--tRNA ligase"/>
    <property type="match status" value="1"/>
</dbReference>
<dbReference type="Gene3D" id="2.20.28.290">
    <property type="match status" value="1"/>
</dbReference>
<dbReference type="Gene3D" id="3.10.20.590">
    <property type="match status" value="1"/>
</dbReference>
<dbReference type="Gene3D" id="3.40.50.620">
    <property type="entry name" value="HUPs"/>
    <property type="match status" value="2"/>
</dbReference>
<dbReference type="Gene3D" id="1.10.730.10">
    <property type="entry name" value="Isoleucyl-tRNA Synthetase, Domain 1"/>
    <property type="match status" value="1"/>
</dbReference>
<dbReference type="HAMAP" id="MF_00049_B">
    <property type="entry name" value="Leu_tRNA_synth_B"/>
    <property type="match status" value="1"/>
</dbReference>
<dbReference type="InterPro" id="IPR001412">
    <property type="entry name" value="aa-tRNA-synth_I_CS"/>
</dbReference>
<dbReference type="InterPro" id="IPR002300">
    <property type="entry name" value="aa-tRNA-synth_Ia"/>
</dbReference>
<dbReference type="InterPro" id="IPR002302">
    <property type="entry name" value="Leu-tRNA-ligase"/>
</dbReference>
<dbReference type="InterPro" id="IPR025709">
    <property type="entry name" value="Leu_tRNA-synth_edit"/>
</dbReference>
<dbReference type="InterPro" id="IPR013155">
    <property type="entry name" value="M/V/L/I-tRNA-synth_anticd-bd"/>
</dbReference>
<dbReference type="InterPro" id="IPR015413">
    <property type="entry name" value="Methionyl/Leucyl_tRNA_Synth"/>
</dbReference>
<dbReference type="InterPro" id="IPR014729">
    <property type="entry name" value="Rossmann-like_a/b/a_fold"/>
</dbReference>
<dbReference type="InterPro" id="IPR009080">
    <property type="entry name" value="tRNAsynth_Ia_anticodon-bd"/>
</dbReference>
<dbReference type="InterPro" id="IPR009008">
    <property type="entry name" value="Val/Leu/Ile-tRNA-synth_edit"/>
</dbReference>
<dbReference type="NCBIfam" id="TIGR00396">
    <property type="entry name" value="leuS_bact"/>
    <property type="match status" value="1"/>
</dbReference>
<dbReference type="PANTHER" id="PTHR43740:SF2">
    <property type="entry name" value="LEUCINE--TRNA LIGASE, MITOCHONDRIAL"/>
    <property type="match status" value="1"/>
</dbReference>
<dbReference type="PANTHER" id="PTHR43740">
    <property type="entry name" value="LEUCYL-TRNA SYNTHETASE"/>
    <property type="match status" value="1"/>
</dbReference>
<dbReference type="Pfam" id="PF08264">
    <property type="entry name" value="Anticodon_1"/>
    <property type="match status" value="1"/>
</dbReference>
<dbReference type="Pfam" id="PF00133">
    <property type="entry name" value="tRNA-synt_1"/>
    <property type="match status" value="2"/>
</dbReference>
<dbReference type="Pfam" id="PF13603">
    <property type="entry name" value="tRNA-synt_1_2"/>
    <property type="match status" value="1"/>
</dbReference>
<dbReference type="Pfam" id="PF09334">
    <property type="entry name" value="tRNA-synt_1g"/>
    <property type="match status" value="1"/>
</dbReference>
<dbReference type="PRINTS" id="PR00985">
    <property type="entry name" value="TRNASYNTHLEU"/>
</dbReference>
<dbReference type="SUPFAM" id="SSF47323">
    <property type="entry name" value="Anticodon-binding domain of a subclass of class I aminoacyl-tRNA synthetases"/>
    <property type="match status" value="1"/>
</dbReference>
<dbReference type="SUPFAM" id="SSF52374">
    <property type="entry name" value="Nucleotidylyl transferase"/>
    <property type="match status" value="1"/>
</dbReference>
<dbReference type="SUPFAM" id="SSF50677">
    <property type="entry name" value="ValRS/IleRS/LeuRS editing domain"/>
    <property type="match status" value="1"/>
</dbReference>
<dbReference type="PROSITE" id="PS00178">
    <property type="entry name" value="AA_TRNA_LIGASE_I"/>
    <property type="match status" value="1"/>
</dbReference>
<protein>
    <recommendedName>
        <fullName evidence="1">Leucine--tRNA ligase</fullName>
        <ecNumber evidence="1">6.1.1.4</ecNumber>
    </recommendedName>
    <alternativeName>
        <fullName evidence="1">Leucyl-tRNA synthetase</fullName>
        <shortName evidence="1">LeuRS</shortName>
    </alternativeName>
</protein>
<keyword id="KW-0030">Aminoacyl-tRNA synthetase</keyword>
<keyword id="KW-0067">ATP-binding</keyword>
<keyword id="KW-0963">Cytoplasm</keyword>
<keyword id="KW-0436">Ligase</keyword>
<keyword id="KW-0547">Nucleotide-binding</keyword>
<keyword id="KW-0648">Protein biosynthesis</keyword>
<keyword id="KW-1185">Reference proteome</keyword>
<reference key="1">
    <citation type="journal article" date="2007" name="PLoS Genet.">
        <title>A tale of two oxidation states: bacterial colonization of arsenic-rich environments.</title>
        <authorList>
            <person name="Muller D."/>
            <person name="Medigue C."/>
            <person name="Koechler S."/>
            <person name="Barbe V."/>
            <person name="Barakat M."/>
            <person name="Talla E."/>
            <person name="Bonnefoy V."/>
            <person name="Krin E."/>
            <person name="Arsene-Ploetze F."/>
            <person name="Carapito C."/>
            <person name="Chandler M."/>
            <person name="Cournoyer B."/>
            <person name="Cruveiller S."/>
            <person name="Dossat C."/>
            <person name="Duval S."/>
            <person name="Heymann M."/>
            <person name="Leize E."/>
            <person name="Lieutaud A."/>
            <person name="Lievremont D."/>
            <person name="Makita Y."/>
            <person name="Mangenot S."/>
            <person name="Nitschke W."/>
            <person name="Ortet P."/>
            <person name="Perdrial N."/>
            <person name="Schoepp B."/>
            <person name="Siguier P."/>
            <person name="Simeonova D.D."/>
            <person name="Rouy Z."/>
            <person name="Segurens B."/>
            <person name="Turlin E."/>
            <person name="Vallenet D."/>
            <person name="van Dorsselaer A."/>
            <person name="Weiss S."/>
            <person name="Weissenbach J."/>
            <person name="Lett M.-C."/>
            <person name="Danchin A."/>
            <person name="Bertin P.N."/>
        </authorList>
    </citation>
    <scope>NUCLEOTIDE SEQUENCE [LARGE SCALE GENOMIC DNA]</scope>
    <source>
        <strain>ULPAs1</strain>
    </source>
</reference>
<accession>A4G8E6</accession>
<sequence>MQDKYSPADVEKSAHDHWQATDAYKAVEHAKDKNGKDKKKFYACSMLPYPSGKLHMGHVRNYTINDVMYRYLRMNGYNVLMPMGWDAFGMPAENAAMANNVPPAQWTYANIEHMKTQMASMGLAIDWSREMTACKPEYYKWNQWMFLKMLEKGIIYKKTGSVNWDPIDQTVLANEQVIDGRGWRSGALIEKREIPMYYARITDYAEELLDHVEHKLPGWPERVRTMQANWIGKSTGVRFAFTHDIKDDDKLINDGKLWVFTTRADTIKGVTFCAVAAEHPLATFAAKSNPELAEFIAECKLGSVIEADMATMEKKGMPTGLFVKHPLTGSLVEVWVGNYVLITYGDGAVMGVPAHDERDFAFAQKYVLPIHQVIDVEGKTFSEVTWHDWYADKENGRCINSGKYDGLNYQQAVNTIAADLEELGLGEKKITYRLRDWGISRQRYWGTPIPMINCADCGAVPVPEKDLPVVLPEDCVPDGSGNPLNKHEAFLKCDCPKCGKPARRETDTMDTFVDSSWYYMRYCSPNSNDAMVDSRNDYWMPMDQYIGGIEHAVLHLLYARFWTKVMRDFGLVKFDEPFTNLLTQGMVLNETYYREDASGKKTWFNPADVQLELDDKGRPVSAILNNDRQPVEIGGTEKMSKSKNNGIDPQAQIDQYGADTARLFTMFASPPEQTLEWSGAGVEGANRFLRRVWTYAYNQSARIAAATASDFSKLSDAQKTLRREVHKILQQADNDYKRIQYNTVVSAGMKMLNTLEGAKLDESAASNAVIAEGLSIFLRILNPVAPHITHVLWQELGFAKVHGDILDAAWPQVDAGALEQAEIEMMIQVNGKLRGSIVVAKDADKATIEATALANEAVRKFIEGTPKKIIVVPGKLVNIVA</sequence>
<gene>
    <name evidence="1" type="primary">leuS</name>
    <name type="ordered locus">HEAR2661</name>
</gene>
<proteinExistence type="inferred from homology"/>